<organism>
    <name type="scientific">Escherichia coli O45:K1 (strain S88 / ExPEC)</name>
    <dbReference type="NCBI Taxonomy" id="585035"/>
    <lineage>
        <taxon>Bacteria</taxon>
        <taxon>Pseudomonadati</taxon>
        <taxon>Pseudomonadota</taxon>
        <taxon>Gammaproteobacteria</taxon>
        <taxon>Enterobacterales</taxon>
        <taxon>Enterobacteriaceae</taxon>
        <taxon>Escherichia</taxon>
    </lineage>
</organism>
<keyword id="KW-0119">Carbohydrate metabolism</keyword>
<keyword id="KW-0210">Decarboxylase</keyword>
<keyword id="KW-0456">Lyase</keyword>
<keyword id="KW-0460">Magnesium</keyword>
<keyword id="KW-0479">Metal-binding</keyword>
<keyword id="KW-1185">Reference proteome</keyword>
<dbReference type="EC" id="4.1.1.85" evidence="1"/>
<dbReference type="EMBL" id="CU928161">
    <property type="protein sequence ID" value="CAR05931.1"/>
    <property type="molecule type" value="Genomic_DNA"/>
</dbReference>
<dbReference type="RefSeq" id="WP_000056749.1">
    <property type="nucleotide sequence ID" value="NC_011742.1"/>
</dbReference>
<dbReference type="SMR" id="B7MLK1"/>
<dbReference type="KEGG" id="ecz:ECS88_4782"/>
<dbReference type="HOGENOM" id="CLU_081825_0_0_6"/>
<dbReference type="UniPathway" id="UPA00263">
    <property type="reaction ID" value="UER00378"/>
</dbReference>
<dbReference type="Proteomes" id="UP000000747">
    <property type="component" value="Chromosome"/>
</dbReference>
<dbReference type="GO" id="GO:0033982">
    <property type="term" value="F:3-dehydro-L-gulonate-6-phosphate decarboxylase activity"/>
    <property type="evidence" value="ECO:0007669"/>
    <property type="project" value="UniProtKB-EC"/>
</dbReference>
<dbReference type="GO" id="GO:0000287">
    <property type="term" value="F:magnesium ion binding"/>
    <property type="evidence" value="ECO:0007669"/>
    <property type="project" value="UniProtKB-UniRule"/>
</dbReference>
<dbReference type="GO" id="GO:0004590">
    <property type="term" value="F:orotidine-5'-phosphate decarboxylase activity"/>
    <property type="evidence" value="ECO:0007669"/>
    <property type="project" value="InterPro"/>
</dbReference>
<dbReference type="GO" id="GO:0006207">
    <property type="term" value="P:'de novo' pyrimidine nucleobase biosynthetic process"/>
    <property type="evidence" value="ECO:0007669"/>
    <property type="project" value="InterPro"/>
</dbReference>
<dbReference type="GO" id="GO:0019854">
    <property type="term" value="P:L-ascorbic acid catabolic process"/>
    <property type="evidence" value="ECO:0007669"/>
    <property type="project" value="UniProtKB-UniRule"/>
</dbReference>
<dbReference type="CDD" id="cd04726">
    <property type="entry name" value="KGPDC_HPS"/>
    <property type="match status" value="1"/>
</dbReference>
<dbReference type="FunFam" id="3.20.20.70:FF:000022">
    <property type="entry name" value="3-keto-L-gulonate-6-phosphate decarboxylase UlaD"/>
    <property type="match status" value="1"/>
</dbReference>
<dbReference type="Gene3D" id="3.20.20.70">
    <property type="entry name" value="Aldolase class I"/>
    <property type="match status" value="1"/>
</dbReference>
<dbReference type="HAMAP" id="MF_01267">
    <property type="entry name" value="UlaD"/>
    <property type="match status" value="1"/>
</dbReference>
<dbReference type="InterPro" id="IPR023942">
    <property type="entry name" value="3-keto-L-gulonate6Pdecase_UlaD"/>
</dbReference>
<dbReference type="InterPro" id="IPR013785">
    <property type="entry name" value="Aldolase_TIM"/>
</dbReference>
<dbReference type="InterPro" id="IPR041710">
    <property type="entry name" value="HPS/KGPDC"/>
</dbReference>
<dbReference type="InterPro" id="IPR001754">
    <property type="entry name" value="OMPdeCOase_dom"/>
</dbReference>
<dbReference type="InterPro" id="IPR011060">
    <property type="entry name" value="RibuloseP-bd_barrel"/>
</dbReference>
<dbReference type="NCBIfam" id="NF009832">
    <property type="entry name" value="PRK13306.1"/>
    <property type="match status" value="1"/>
</dbReference>
<dbReference type="PANTHER" id="PTHR35039">
    <property type="entry name" value="3-KETO-L-GULONATE-6-PHOSPHATE DECARBOXYLASE SGBH-RELATED"/>
    <property type="match status" value="1"/>
</dbReference>
<dbReference type="PANTHER" id="PTHR35039:SF3">
    <property type="entry name" value="3-KETO-L-GULONATE-6-PHOSPHATE DECARBOXYLASE SGBH-RELATED"/>
    <property type="match status" value="1"/>
</dbReference>
<dbReference type="Pfam" id="PF00215">
    <property type="entry name" value="OMPdecase"/>
    <property type="match status" value="1"/>
</dbReference>
<dbReference type="SMART" id="SM00934">
    <property type="entry name" value="OMPdecase"/>
    <property type="match status" value="1"/>
</dbReference>
<dbReference type="SUPFAM" id="SSF51366">
    <property type="entry name" value="Ribulose-phoshate binding barrel"/>
    <property type="match status" value="1"/>
</dbReference>
<comment type="function">
    <text evidence="1">Catalyzes the decarboxylation of 3-keto-L-gulonate-6-P into L-xylulose-5-P. Is involved in the anaerobic L-ascorbate utilization.</text>
</comment>
<comment type="catalytic activity">
    <reaction evidence="1">
        <text>3-dehydro-L-gulonate 6-phosphate + H(+) = L-xylulose 5-phosphate + CO2</text>
        <dbReference type="Rhea" id="RHEA:14353"/>
        <dbReference type="ChEBI" id="CHEBI:15378"/>
        <dbReference type="ChEBI" id="CHEBI:16526"/>
        <dbReference type="ChEBI" id="CHEBI:57829"/>
        <dbReference type="ChEBI" id="CHEBI:58774"/>
        <dbReference type="EC" id="4.1.1.85"/>
    </reaction>
</comment>
<comment type="cofactor">
    <cofactor evidence="1">
        <name>Mg(2+)</name>
        <dbReference type="ChEBI" id="CHEBI:18420"/>
    </cofactor>
    <text evidence="1">Binds 1 Mg(2+) ion per subunit.</text>
</comment>
<comment type="pathway">
    <text evidence="1">Cofactor degradation; L-ascorbate degradation; D-xylulose 5-phosphate from L-ascorbate: step 2/4.</text>
</comment>
<comment type="subunit">
    <text evidence="1">Homodimer.</text>
</comment>
<comment type="induction">
    <text evidence="1">Induced by L-ascorbate. Repressed by UlaR.</text>
</comment>
<comment type="similarity">
    <text evidence="1">Belongs to the HPS/KGPDC family. KGPDC subfamily.</text>
</comment>
<sequence>MSLPMLQVALDNQTMDSAYETTRLIAEEVDIIEVGTILCVGEGVRAVRDLKALYPHKIVLADAKIADAGKILSRMCFEANADWVTVICCADINTAKGALDVAKEFNGDVQIELTGYWTWEQAQQWRDAGIGQVVYHRSRDAQAAGVAWGEADITAIKRLSDMGFKVTVTGGLALEDLPLFKGIPIHVFIAGRSIRDAASPVEAARQFKRSIAELWG</sequence>
<accession>B7MLK1</accession>
<evidence type="ECO:0000255" key="1">
    <source>
        <dbReference type="HAMAP-Rule" id="MF_01267"/>
    </source>
</evidence>
<name>ULAD_ECO45</name>
<feature type="chain" id="PRO_1000140109" description="3-keto-L-gulonate-6-phosphate decarboxylase UlaD">
    <location>
        <begin position="1"/>
        <end position="216"/>
    </location>
</feature>
<feature type="binding site" evidence="1">
    <location>
        <position position="11"/>
    </location>
    <ligand>
        <name>substrate</name>
    </ligand>
</feature>
<feature type="binding site" evidence="1">
    <location>
        <position position="33"/>
    </location>
    <ligand>
        <name>Mg(2+)</name>
        <dbReference type="ChEBI" id="CHEBI:18420"/>
    </ligand>
</feature>
<feature type="binding site" evidence="1">
    <location>
        <position position="62"/>
    </location>
    <ligand>
        <name>Mg(2+)</name>
        <dbReference type="ChEBI" id="CHEBI:18420"/>
    </ligand>
</feature>
<feature type="binding site" evidence="1">
    <location>
        <position position="192"/>
    </location>
    <ligand>
        <name>substrate</name>
    </ligand>
</feature>
<feature type="site" description="Transition state stabilizer" evidence="1">
    <location>
        <position position="64"/>
    </location>
</feature>
<feature type="site" description="Transition state stabilizer" evidence="1">
    <location>
        <position position="67"/>
    </location>
</feature>
<proteinExistence type="inferred from homology"/>
<gene>
    <name evidence="1" type="primary">ulaD</name>
    <name type="ordered locus">ECS88_4782</name>
</gene>
<reference key="1">
    <citation type="journal article" date="2009" name="PLoS Genet.">
        <title>Organised genome dynamics in the Escherichia coli species results in highly diverse adaptive paths.</title>
        <authorList>
            <person name="Touchon M."/>
            <person name="Hoede C."/>
            <person name="Tenaillon O."/>
            <person name="Barbe V."/>
            <person name="Baeriswyl S."/>
            <person name="Bidet P."/>
            <person name="Bingen E."/>
            <person name="Bonacorsi S."/>
            <person name="Bouchier C."/>
            <person name="Bouvet O."/>
            <person name="Calteau A."/>
            <person name="Chiapello H."/>
            <person name="Clermont O."/>
            <person name="Cruveiller S."/>
            <person name="Danchin A."/>
            <person name="Diard M."/>
            <person name="Dossat C."/>
            <person name="Karoui M.E."/>
            <person name="Frapy E."/>
            <person name="Garry L."/>
            <person name="Ghigo J.M."/>
            <person name="Gilles A.M."/>
            <person name="Johnson J."/>
            <person name="Le Bouguenec C."/>
            <person name="Lescat M."/>
            <person name="Mangenot S."/>
            <person name="Martinez-Jehanne V."/>
            <person name="Matic I."/>
            <person name="Nassif X."/>
            <person name="Oztas S."/>
            <person name="Petit M.A."/>
            <person name="Pichon C."/>
            <person name="Rouy Z."/>
            <person name="Ruf C.S."/>
            <person name="Schneider D."/>
            <person name="Tourret J."/>
            <person name="Vacherie B."/>
            <person name="Vallenet D."/>
            <person name="Medigue C."/>
            <person name="Rocha E.P.C."/>
            <person name="Denamur E."/>
        </authorList>
    </citation>
    <scope>NUCLEOTIDE SEQUENCE [LARGE SCALE GENOMIC DNA]</scope>
    <source>
        <strain>S88 / ExPEC</strain>
    </source>
</reference>
<protein>
    <recommendedName>
        <fullName evidence="1">3-keto-L-gulonate-6-phosphate decarboxylase UlaD</fullName>
        <ecNumber evidence="1">4.1.1.85</ecNumber>
    </recommendedName>
    <alternativeName>
        <fullName evidence="1">3-dehydro-L-gulonate-6-phosphate decarboxylase</fullName>
    </alternativeName>
    <alternativeName>
        <fullName evidence="1">KGPDC</fullName>
    </alternativeName>
    <alternativeName>
        <fullName evidence="1">L-ascorbate utilization protein D</fullName>
    </alternativeName>
</protein>